<accession>Q66GV6</accession>
<protein>
    <recommendedName>
        <fullName>Lys-63-specific deubiquitinase BRCC36</fullName>
        <ecNumber evidence="2">3.4.19.-</ecNumber>
    </recommendedName>
    <alternativeName>
        <fullName>BRCA1-A complex subunit BRCC36</fullName>
    </alternativeName>
    <alternativeName>
        <fullName>BRCA1/BRCA2-containing complex subunit 3</fullName>
    </alternativeName>
    <alternativeName>
        <fullName>BRCA1/BRCA2-containing complex subunit 36</fullName>
    </alternativeName>
    <alternativeName>
        <fullName>BRISC complex subunit BRCC36</fullName>
    </alternativeName>
</protein>
<proteinExistence type="evidence at transcript level"/>
<keyword id="KW-0131">Cell cycle</keyword>
<keyword id="KW-0132">Cell division</keyword>
<keyword id="KW-0156">Chromatin regulator</keyword>
<keyword id="KW-0963">Cytoplasm</keyword>
<keyword id="KW-0206">Cytoskeleton</keyword>
<keyword id="KW-0227">DNA damage</keyword>
<keyword id="KW-0234">DNA repair</keyword>
<keyword id="KW-0378">Hydrolase</keyword>
<keyword id="KW-0479">Metal-binding</keyword>
<keyword id="KW-0482">Metalloprotease</keyword>
<keyword id="KW-0498">Mitosis</keyword>
<keyword id="KW-0539">Nucleus</keyword>
<keyword id="KW-0645">Protease</keyword>
<keyword id="KW-1185">Reference proteome</keyword>
<keyword id="KW-0833">Ubl conjugation pathway</keyword>
<keyword id="KW-0862">Zinc</keyword>
<reference key="1">
    <citation type="submission" date="2004-09" db="EMBL/GenBank/DDBJ databases">
        <authorList>
            <consortium name="NIH - Xenopus Gene Collection (XGC) project"/>
        </authorList>
    </citation>
    <scope>NUCLEOTIDE SEQUENCE [LARGE SCALE MRNA]</scope>
    <source>
        <tissue>Testis</tissue>
    </source>
</reference>
<comment type="function">
    <text evidence="2 3">Metalloprotease that specifically cleaves 'Lys-63'-linked polyubiquitin chains. Does not have activity toward 'Lys-48'-linked polyubiquitin chains. Component of the BRCA1-A complex, a complex that specifically recognizes 'Lys-63'-linked ubiquitinated histones H2A and H2AX at DNA lesions sites, leading to target the brca1-bard1 heterodimer to sites of DNA damage at double-strand breaks (DSBs). In the BRCA1-A complex, it specifically removes 'Lys-63'-linked ubiquitin on histones H2A and H2AX, antagonizing the rnf8-dependent ubiquitination at double-strand breaks (DSBs). Catalytic subunit of the BRISC complex, a multiprotein complex that specifically cleaves 'Lys-63'-linked ubiquitin in various substrates. Mediates the specific 'Lys-63'-specific deubiquitination associated with the COP9 signalosome complex (CSN), via the interaction of the BRISC complex with the CSN complex. The BRISC complex is required for normal mitotic spindle assembly and microtubule attachment to kinetochores via its role in deubiquitinating numa1. Plays a role in interferon signaling via its role in the deubiquitination of the interferon receptor ifnar1; deubiquitination increases ifnar1 activity by enhancing its stability and cell surface expression. Acts as a regulator of the NLRP3 inflammasome by mediating deubiquitination of nlrp3. Down-regulates the response to bacterial lipopolysaccharide (LPS) via its role in ifnar1 deubiquitination.</text>
</comment>
<comment type="cofactor">
    <cofactor evidence="1">
        <name>Zn(2+)</name>
        <dbReference type="ChEBI" id="CHEBI:29105"/>
    </cofactor>
    <text evidence="1">Binds 1 zinc ion per subunit.</text>
</comment>
<comment type="subunit">
    <text evidence="2">Component of the BRCA1-A complex, at least composed of brca1, bard1, uimc1/rap80, abraxas1, brcc3/brcc36, babam2 and babam1/nba1. In the BRCA1-A complex, interacts directly with ABRAXAS1 and babam2. Component of the BRISC complex, at least composed of ABRAXAS2, brcc3/brcc36, babam2 and babam1/nba1. Within the complex, interacts directly with abraxas2. Both the BRCA1-A complex and the BRISC complex bind polyubiquitin (By similarity).</text>
</comment>
<comment type="subcellular location">
    <subcellularLocation>
        <location evidence="2">Nucleus</location>
    </subcellularLocation>
    <subcellularLocation>
        <location evidence="2">Cytoplasm</location>
    </subcellularLocation>
    <subcellularLocation>
        <location evidence="2">Cytoplasm</location>
        <location evidence="2">Cytoskeleton</location>
        <location evidence="2">Spindle pole</location>
    </subcellularLocation>
    <text evidence="2">Localizes at sites of DNA damage at double-strand breaks (DSBs). Interaction with abraxas2 retains brcc3 in the cytoplasm.</text>
</comment>
<comment type="similarity">
    <text evidence="5">Belongs to the peptidase M67A family. BRCC36 subfamily.</text>
</comment>
<evidence type="ECO:0000250" key="1">
    <source>
        <dbReference type="UniProtKB" id="E2AXC7"/>
    </source>
</evidence>
<evidence type="ECO:0000250" key="2">
    <source>
        <dbReference type="UniProtKB" id="P46736"/>
    </source>
</evidence>
<evidence type="ECO:0000250" key="3">
    <source>
        <dbReference type="UniProtKB" id="P46737"/>
    </source>
</evidence>
<evidence type="ECO:0000255" key="4">
    <source>
        <dbReference type="PROSITE-ProRule" id="PRU01182"/>
    </source>
</evidence>
<evidence type="ECO:0000305" key="5"/>
<gene>
    <name type="primary">brcc3</name>
    <name type="synonym">brcc36</name>
</gene>
<sequence length="261" mass="29789">MAVQAVHIQGDAFLVCVTHSLSTEREEVMGLCIGEVDTQKLVHIHSVIILRRSDKRKDRVEISPEQLSAATIEADRLADITGRPMRVVGWYHSHPHITVWPSHVDVRTQAMYQMMDVGFVGLIFSCFIEDKNTKTGRILYTCFQSVQAQKSSEYERIEVPLHVVPHNTIRKVCLESAVELPRILCQEEQDAYRRIHSLGHLDSITKIHNGSVFTKNLCGQMSAISGPLLQWLEDRLEQNRQRAQELQSEKEQLLQELKTLG</sequence>
<feature type="chain" id="PRO_0000373949" description="Lys-63-specific deubiquitinase BRCC36">
    <location>
        <begin position="1"/>
        <end position="261"/>
    </location>
</feature>
<feature type="domain" description="MPN" evidence="4">
    <location>
        <begin position="6"/>
        <end position="149"/>
    </location>
</feature>
<feature type="short sequence motif" description="JAMM motif" evidence="4">
    <location>
        <begin position="92"/>
        <end position="105"/>
    </location>
</feature>
<feature type="binding site" evidence="4">
    <location>
        <position position="92"/>
    </location>
    <ligand>
        <name>Zn(2+)</name>
        <dbReference type="ChEBI" id="CHEBI:29105"/>
        <note>catalytic</note>
    </ligand>
</feature>
<feature type="binding site" evidence="4">
    <location>
        <position position="94"/>
    </location>
    <ligand>
        <name>Zn(2+)</name>
        <dbReference type="ChEBI" id="CHEBI:29105"/>
        <note>catalytic</note>
    </ligand>
</feature>
<feature type="binding site" evidence="4">
    <location>
        <position position="105"/>
    </location>
    <ligand>
        <name>Zn(2+)</name>
        <dbReference type="ChEBI" id="CHEBI:29105"/>
        <note>catalytic</note>
    </ligand>
</feature>
<dbReference type="EC" id="3.4.19.-" evidence="2"/>
<dbReference type="EMBL" id="BC082208">
    <property type="protein sequence ID" value="AAH82208.1"/>
    <property type="molecule type" value="mRNA"/>
</dbReference>
<dbReference type="RefSeq" id="NP_001087827.1">
    <property type="nucleotide sequence ID" value="NM_001094358.1"/>
</dbReference>
<dbReference type="SMR" id="Q66GV6"/>
<dbReference type="BioGRID" id="104548">
    <property type="interactions" value="1"/>
</dbReference>
<dbReference type="IntAct" id="Q66GV6">
    <property type="interactions" value="1"/>
</dbReference>
<dbReference type="MEROPS" id="M67.004"/>
<dbReference type="DNASU" id="447688"/>
<dbReference type="GeneID" id="447688"/>
<dbReference type="KEGG" id="xla:447688"/>
<dbReference type="AGR" id="Xenbase:XB-GENE-5812935"/>
<dbReference type="CTD" id="447688"/>
<dbReference type="Xenbase" id="XB-GENE-5812935">
    <property type="gene designation" value="brcc3.L"/>
</dbReference>
<dbReference type="OMA" id="CIGEIDT"/>
<dbReference type="OrthoDB" id="446074at2759"/>
<dbReference type="Proteomes" id="UP000186698">
    <property type="component" value="Chromosome 8L"/>
</dbReference>
<dbReference type="Bgee" id="447688">
    <property type="expression patterns" value="Expressed in testis and 20 other cell types or tissues"/>
</dbReference>
<dbReference type="GO" id="GO:0070531">
    <property type="term" value="C:BRCA1-A complex"/>
    <property type="evidence" value="ECO:0000250"/>
    <property type="project" value="UniProtKB"/>
</dbReference>
<dbReference type="GO" id="GO:0070552">
    <property type="term" value="C:BRISC complex"/>
    <property type="evidence" value="ECO:0000250"/>
    <property type="project" value="UniProtKB"/>
</dbReference>
<dbReference type="GO" id="GO:0005737">
    <property type="term" value="C:cytoplasm"/>
    <property type="evidence" value="ECO:0007669"/>
    <property type="project" value="UniProtKB-SubCell"/>
</dbReference>
<dbReference type="GO" id="GO:0005634">
    <property type="term" value="C:nucleus"/>
    <property type="evidence" value="ECO:0000250"/>
    <property type="project" value="UniProtKB"/>
</dbReference>
<dbReference type="GO" id="GO:0000922">
    <property type="term" value="C:spindle pole"/>
    <property type="evidence" value="ECO:0007669"/>
    <property type="project" value="UniProtKB-SubCell"/>
</dbReference>
<dbReference type="GO" id="GO:0004843">
    <property type="term" value="F:cysteine-type deubiquitinase activity"/>
    <property type="evidence" value="ECO:0007669"/>
    <property type="project" value="InterPro"/>
</dbReference>
<dbReference type="GO" id="GO:0046872">
    <property type="term" value="F:metal ion binding"/>
    <property type="evidence" value="ECO:0007669"/>
    <property type="project" value="UniProtKB-KW"/>
</dbReference>
<dbReference type="GO" id="GO:0140492">
    <property type="term" value="F:metal-dependent deubiquitinase activity"/>
    <property type="evidence" value="ECO:0000250"/>
    <property type="project" value="UniProtKB"/>
</dbReference>
<dbReference type="GO" id="GO:0008237">
    <property type="term" value="F:metallopeptidase activity"/>
    <property type="evidence" value="ECO:0000250"/>
    <property type="project" value="UniProtKB"/>
</dbReference>
<dbReference type="GO" id="GO:0031593">
    <property type="term" value="F:polyubiquitin modification-dependent protein binding"/>
    <property type="evidence" value="ECO:0000250"/>
    <property type="project" value="UniProtKB"/>
</dbReference>
<dbReference type="GO" id="GO:0051301">
    <property type="term" value="P:cell division"/>
    <property type="evidence" value="ECO:0007669"/>
    <property type="project" value="UniProtKB-KW"/>
</dbReference>
<dbReference type="GO" id="GO:0140861">
    <property type="term" value="P:DNA repair-dependent chromatin remodeling"/>
    <property type="evidence" value="ECO:0000250"/>
    <property type="project" value="UniProtKB"/>
</dbReference>
<dbReference type="GO" id="GO:0006302">
    <property type="term" value="P:double-strand break repair"/>
    <property type="evidence" value="ECO:0000250"/>
    <property type="project" value="UniProtKB"/>
</dbReference>
<dbReference type="GO" id="GO:0007095">
    <property type="term" value="P:mitotic G2 DNA damage checkpoint signaling"/>
    <property type="evidence" value="ECO:0000250"/>
    <property type="project" value="UniProtKB"/>
</dbReference>
<dbReference type="GO" id="GO:0045739">
    <property type="term" value="P:positive regulation of DNA repair"/>
    <property type="evidence" value="ECO:0000250"/>
    <property type="project" value="UniProtKB"/>
</dbReference>
<dbReference type="GO" id="GO:1900227">
    <property type="term" value="P:positive regulation of NLRP3 inflammasome complex assembly"/>
    <property type="evidence" value="ECO:0000250"/>
    <property type="project" value="UniProtKB"/>
</dbReference>
<dbReference type="GO" id="GO:0070536">
    <property type="term" value="P:protein K63-linked deubiquitination"/>
    <property type="evidence" value="ECO:0000250"/>
    <property type="project" value="UniProtKB"/>
</dbReference>
<dbReference type="GO" id="GO:0006508">
    <property type="term" value="P:proteolysis"/>
    <property type="evidence" value="ECO:0007669"/>
    <property type="project" value="UniProtKB-KW"/>
</dbReference>
<dbReference type="GO" id="GO:0010212">
    <property type="term" value="P:response to ionizing radiation"/>
    <property type="evidence" value="ECO:0000250"/>
    <property type="project" value="UniProtKB"/>
</dbReference>
<dbReference type="CDD" id="cd08068">
    <property type="entry name" value="MPN_BRCC36"/>
    <property type="match status" value="1"/>
</dbReference>
<dbReference type="FunFam" id="3.40.140.10:FF:000015">
    <property type="entry name" value="Lys-63-specific deubiquitinase BRCC36 isoform 3"/>
    <property type="match status" value="1"/>
</dbReference>
<dbReference type="Gene3D" id="3.40.140.10">
    <property type="entry name" value="Cytidine Deaminase, domain 2"/>
    <property type="match status" value="1"/>
</dbReference>
<dbReference type="InterPro" id="IPR040749">
    <property type="entry name" value="BRCC36_C"/>
</dbReference>
<dbReference type="InterPro" id="IPR000555">
    <property type="entry name" value="JAMM/MPN+_dom"/>
</dbReference>
<dbReference type="InterPro" id="IPR050242">
    <property type="entry name" value="JAMM_MPN+_peptidase_M67A"/>
</dbReference>
<dbReference type="InterPro" id="IPR037518">
    <property type="entry name" value="MPN"/>
</dbReference>
<dbReference type="InterPro" id="IPR033860">
    <property type="entry name" value="MPN_BRCC36"/>
</dbReference>
<dbReference type="PANTHER" id="PTHR10410">
    <property type="entry name" value="EUKARYOTIC TRANSLATION INITIATION FACTOR 3 -RELATED"/>
    <property type="match status" value="1"/>
</dbReference>
<dbReference type="Pfam" id="PF18110">
    <property type="entry name" value="BRCC36_C"/>
    <property type="match status" value="1"/>
</dbReference>
<dbReference type="Pfam" id="PF01398">
    <property type="entry name" value="JAB"/>
    <property type="match status" value="1"/>
</dbReference>
<dbReference type="SMART" id="SM00232">
    <property type="entry name" value="JAB_MPN"/>
    <property type="match status" value="1"/>
</dbReference>
<dbReference type="SUPFAM" id="SSF102712">
    <property type="entry name" value="JAB1/MPN domain"/>
    <property type="match status" value="1"/>
</dbReference>
<dbReference type="PROSITE" id="PS50249">
    <property type="entry name" value="MPN"/>
    <property type="match status" value="1"/>
</dbReference>
<name>BRCC3_XENLA</name>
<organism>
    <name type="scientific">Xenopus laevis</name>
    <name type="common">African clawed frog</name>
    <dbReference type="NCBI Taxonomy" id="8355"/>
    <lineage>
        <taxon>Eukaryota</taxon>
        <taxon>Metazoa</taxon>
        <taxon>Chordata</taxon>
        <taxon>Craniata</taxon>
        <taxon>Vertebrata</taxon>
        <taxon>Euteleostomi</taxon>
        <taxon>Amphibia</taxon>
        <taxon>Batrachia</taxon>
        <taxon>Anura</taxon>
        <taxon>Pipoidea</taxon>
        <taxon>Pipidae</taxon>
        <taxon>Xenopodinae</taxon>
        <taxon>Xenopus</taxon>
        <taxon>Xenopus</taxon>
    </lineage>
</organism>